<dbReference type="EMBL" id="AC005275">
    <property type="protein sequence ID" value="AAD14457.1"/>
    <property type="molecule type" value="Genomic_DNA"/>
</dbReference>
<dbReference type="EMBL" id="AL161496">
    <property type="protein sequence ID" value="CAB77814.1"/>
    <property type="molecule type" value="Genomic_DNA"/>
</dbReference>
<dbReference type="EMBL" id="CP002687">
    <property type="protein sequence ID" value="AEE82303.1"/>
    <property type="molecule type" value="Genomic_DNA"/>
</dbReference>
<dbReference type="EMBL" id="BT003938">
    <property type="protein sequence ID" value="AAO41984.1"/>
    <property type="molecule type" value="mRNA"/>
</dbReference>
<dbReference type="EMBL" id="BT005119">
    <property type="protein sequence ID" value="AAO50652.1"/>
    <property type="molecule type" value="mRNA"/>
</dbReference>
<dbReference type="PIR" id="G85041">
    <property type="entry name" value="G85041"/>
</dbReference>
<dbReference type="RefSeq" id="NP_192238.1">
    <property type="nucleotide sequence ID" value="NM_116567.4"/>
</dbReference>
<dbReference type="SMR" id="Q9ZR02"/>
<dbReference type="BioGRID" id="13284">
    <property type="interactions" value="1"/>
</dbReference>
<dbReference type="FunCoup" id="Q9ZR02">
    <property type="interactions" value="202"/>
</dbReference>
<dbReference type="IntAct" id="Q9ZR02">
    <property type="interactions" value="1"/>
</dbReference>
<dbReference type="STRING" id="3702.Q9ZR02"/>
<dbReference type="TCDB" id="8.A.82.1.3">
    <property type="family name" value="the calmodulin calcium binding protein (calmodulin) family"/>
</dbReference>
<dbReference type="PaxDb" id="3702-AT4G03290.1"/>
<dbReference type="ProteomicsDB" id="240908"/>
<dbReference type="EnsemblPlants" id="AT4G03290.1">
    <property type="protein sequence ID" value="AT4G03290.1"/>
    <property type="gene ID" value="AT4G03290"/>
</dbReference>
<dbReference type="GeneID" id="827993"/>
<dbReference type="Gramene" id="AT4G03290.1">
    <property type="protein sequence ID" value="AT4G03290.1"/>
    <property type="gene ID" value="AT4G03290"/>
</dbReference>
<dbReference type="KEGG" id="ath:AT4G03290"/>
<dbReference type="Araport" id="AT4G03290"/>
<dbReference type="TAIR" id="AT4G03290"/>
<dbReference type="eggNOG" id="KOG0027">
    <property type="taxonomic scope" value="Eukaryota"/>
</dbReference>
<dbReference type="HOGENOM" id="CLU_061288_20_3_1"/>
<dbReference type="InParanoid" id="Q9ZR02"/>
<dbReference type="OMA" id="MKKGRFF"/>
<dbReference type="OrthoDB" id="26525at2759"/>
<dbReference type="PhylomeDB" id="Q9ZR02"/>
<dbReference type="PRO" id="PR:Q9ZR02"/>
<dbReference type="Proteomes" id="UP000006548">
    <property type="component" value="Chromosome 4"/>
</dbReference>
<dbReference type="ExpressionAtlas" id="Q9ZR02">
    <property type="expression patterns" value="baseline and differential"/>
</dbReference>
<dbReference type="GO" id="GO:0005737">
    <property type="term" value="C:cytoplasm"/>
    <property type="evidence" value="ECO:0000314"/>
    <property type="project" value="TAIR"/>
</dbReference>
<dbReference type="GO" id="GO:0005634">
    <property type="term" value="C:nucleus"/>
    <property type="evidence" value="ECO:0007005"/>
    <property type="project" value="TAIR"/>
</dbReference>
<dbReference type="GO" id="GO:0005509">
    <property type="term" value="F:calcium ion binding"/>
    <property type="evidence" value="ECO:0007669"/>
    <property type="project" value="InterPro"/>
</dbReference>
<dbReference type="CDD" id="cd00051">
    <property type="entry name" value="EFh"/>
    <property type="match status" value="2"/>
</dbReference>
<dbReference type="FunFam" id="1.10.238.10:FF:000231">
    <property type="entry name" value="Calmodulin-like protein 3"/>
    <property type="match status" value="1"/>
</dbReference>
<dbReference type="FunFam" id="1.10.238.10:FF:000089">
    <property type="entry name" value="calmodulin-like protein 3"/>
    <property type="match status" value="1"/>
</dbReference>
<dbReference type="Gene3D" id="1.10.238.10">
    <property type="entry name" value="EF-hand"/>
    <property type="match status" value="2"/>
</dbReference>
<dbReference type="InterPro" id="IPR011992">
    <property type="entry name" value="EF-hand-dom_pair"/>
</dbReference>
<dbReference type="InterPro" id="IPR018247">
    <property type="entry name" value="EF_Hand_1_Ca_BS"/>
</dbReference>
<dbReference type="InterPro" id="IPR002048">
    <property type="entry name" value="EF_hand_dom"/>
</dbReference>
<dbReference type="InterPro" id="IPR039647">
    <property type="entry name" value="EF_hand_pair_protein_CML-like"/>
</dbReference>
<dbReference type="PANTHER" id="PTHR10891">
    <property type="entry name" value="EF-HAND CALCIUM-BINDING DOMAIN CONTAINING PROTEIN"/>
    <property type="match status" value="1"/>
</dbReference>
<dbReference type="Pfam" id="PF13499">
    <property type="entry name" value="EF-hand_7"/>
    <property type="match status" value="2"/>
</dbReference>
<dbReference type="SMART" id="SM00054">
    <property type="entry name" value="EFh"/>
    <property type="match status" value="4"/>
</dbReference>
<dbReference type="SUPFAM" id="SSF47473">
    <property type="entry name" value="EF-hand"/>
    <property type="match status" value="1"/>
</dbReference>
<dbReference type="PROSITE" id="PS00018">
    <property type="entry name" value="EF_HAND_1"/>
    <property type="match status" value="4"/>
</dbReference>
<dbReference type="PROSITE" id="PS50222">
    <property type="entry name" value="EF_HAND_2"/>
    <property type="match status" value="4"/>
</dbReference>
<organism>
    <name type="scientific">Arabidopsis thaliana</name>
    <name type="common">Mouse-ear cress</name>
    <dbReference type="NCBI Taxonomy" id="3702"/>
    <lineage>
        <taxon>Eukaryota</taxon>
        <taxon>Viridiplantae</taxon>
        <taxon>Streptophyta</taxon>
        <taxon>Embryophyta</taxon>
        <taxon>Tracheophyta</taxon>
        <taxon>Spermatophyta</taxon>
        <taxon>Magnoliopsida</taxon>
        <taxon>eudicotyledons</taxon>
        <taxon>Gunneridae</taxon>
        <taxon>Pentapetalae</taxon>
        <taxon>rosids</taxon>
        <taxon>malvids</taxon>
        <taxon>Brassicales</taxon>
        <taxon>Brassicaceae</taxon>
        <taxon>Camelineae</taxon>
        <taxon>Arabidopsis</taxon>
    </lineage>
</organism>
<accession>Q9ZR02</accession>
<reference key="1">
    <citation type="journal article" date="1999" name="Nature">
        <title>Sequence and analysis of chromosome 4 of the plant Arabidopsis thaliana.</title>
        <authorList>
            <person name="Mayer K.F.X."/>
            <person name="Schueller C."/>
            <person name="Wambutt R."/>
            <person name="Murphy G."/>
            <person name="Volckaert G."/>
            <person name="Pohl T."/>
            <person name="Duesterhoeft A."/>
            <person name="Stiekema W."/>
            <person name="Entian K.-D."/>
            <person name="Terryn N."/>
            <person name="Harris B."/>
            <person name="Ansorge W."/>
            <person name="Brandt P."/>
            <person name="Grivell L.A."/>
            <person name="Rieger M."/>
            <person name="Weichselgartner M."/>
            <person name="de Simone V."/>
            <person name="Obermaier B."/>
            <person name="Mache R."/>
            <person name="Mueller M."/>
            <person name="Kreis M."/>
            <person name="Delseny M."/>
            <person name="Puigdomenech P."/>
            <person name="Watson M."/>
            <person name="Schmidtheini T."/>
            <person name="Reichert B."/>
            <person name="Portetelle D."/>
            <person name="Perez-Alonso M."/>
            <person name="Boutry M."/>
            <person name="Bancroft I."/>
            <person name="Vos P."/>
            <person name="Hoheisel J."/>
            <person name="Zimmermann W."/>
            <person name="Wedler H."/>
            <person name="Ridley P."/>
            <person name="Langham S.-A."/>
            <person name="McCullagh B."/>
            <person name="Bilham L."/>
            <person name="Robben J."/>
            <person name="van der Schueren J."/>
            <person name="Grymonprez B."/>
            <person name="Chuang Y.-J."/>
            <person name="Vandenbussche F."/>
            <person name="Braeken M."/>
            <person name="Weltjens I."/>
            <person name="Voet M."/>
            <person name="Bastiaens I."/>
            <person name="Aert R."/>
            <person name="Defoor E."/>
            <person name="Weitzenegger T."/>
            <person name="Bothe G."/>
            <person name="Ramsperger U."/>
            <person name="Hilbert H."/>
            <person name="Braun M."/>
            <person name="Holzer E."/>
            <person name="Brandt A."/>
            <person name="Peters S."/>
            <person name="van Staveren M."/>
            <person name="Dirkse W."/>
            <person name="Mooijman P."/>
            <person name="Klein Lankhorst R."/>
            <person name="Rose M."/>
            <person name="Hauf J."/>
            <person name="Koetter P."/>
            <person name="Berneiser S."/>
            <person name="Hempel S."/>
            <person name="Feldpausch M."/>
            <person name="Lamberth S."/>
            <person name="Van den Daele H."/>
            <person name="De Keyser A."/>
            <person name="Buysshaert C."/>
            <person name="Gielen J."/>
            <person name="Villarroel R."/>
            <person name="De Clercq R."/>
            <person name="van Montagu M."/>
            <person name="Rogers J."/>
            <person name="Cronin A."/>
            <person name="Quail M.A."/>
            <person name="Bray-Allen S."/>
            <person name="Clark L."/>
            <person name="Doggett J."/>
            <person name="Hall S."/>
            <person name="Kay M."/>
            <person name="Lennard N."/>
            <person name="McLay K."/>
            <person name="Mayes R."/>
            <person name="Pettett A."/>
            <person name="Rajandream M.A."/>
            <person name="Lyne M."/>
            <person name="Benes V."/>
            <person name="Rechmann S."/>
            <person name="Borkova D."/>
            <person name="Bloecker H."/>
            <person name="Scharfe M."/>
            <person name="Grimm M."/>
            <person name="Loehnert T.-H."/>
            <person name="Dose S."/>
            <person name="de Haan M."/>
            <person name="Maarse A.C."/>
            <person name="Schaefer M."/>
            <person name="Mueller-Auer S."/>
            <person name="Gabel C."/>
            <person name="Fuchs M."/>
            <person name="Fartmann B."/>
            <person name="Granderath K."/>
            <person name="Dauner D."/>
            <person name="Herzl A."/>
            <person name="Neumann S."/>
            <person name="Argiriou A."/>
            <person name="Vitale D."/>
            <person name="Liguori R."/>
            <person name="Piravandi E."/>
            <person name="Massenet O."/>
            <person name="Quigley F."/>
            <person name="Clabauld G."/>
            <person name="Muendlein A."/>
            <person name="Felber R."/>
            <person name="Schnabl S."/>
            <person name="Hiller R."/>
            <person name="Schmidt W."/>
            <person name="Lecharny A."/>
            <person name="Aubourg S."/>
            <person name="Chefdor F."/>
            <person name="Cooke R."/>
            <person name="Berger C."/>
            <person name="Monfort A."/>
            <person name="Casacuberta E."/>
            <person name="Gibbons T."/>
            <person name="Weber N."/>
            <person name="Vandenbol M."/>
            <person name="Bargues M."/>
            <person name="Terol J."/>
            <person name="Torres A."/>
            <person name="Perez-Perez A."/>
            <person name="Purnelle B."/>
            <person name="Bent E."/>
            <person name="Johnson S."/>
            <person name="Tacon D."/>
            <person name="Jesse T."/>
            <person name="Heijnen L."/>
            <person name="Schwarz S."/>
            <person name="Scholler P."/>
            <person name="Heber S."/>
            <person name="Francs P."/>
            <person name="Bielke C."/>
            <person name="Frishman D."/>
            <person name="Haase D."/>
            <person name="Lemcke K."/>
            <person name="Mewes H.-W."/>
            <person name="Stocker S."/>
            <person name="Zaccaria P."/>
            <person name="Bevan M."/>
            <person name="Wilson R.K."/>
            <person name="de la Bastide M."/>
            <person name="Habermann K."/>
            <person name="Parnell L."/>
            <person name="Dedhia N."/>
            <person name="Gnoj L."/>
            <person name="Schutz K."/>
            <person name="Huang E."/>
            <person name="Spiegel L."/>
            <person name="Sekhon M."/>
            <person name="Murray J."/>
            <person name="Sheet P."/>
            <person name="Cordes M."/>
            <person name="Abu-Threideh J."/>
            <person name="Stoneking T."/>
            <person name="Kalicki J."/>
            <person name="Graves T."/>
            <person name="Harmon G."/>
            <person name="Edwards J."/>
            <person name="Latreille P."/>
            <person name="Courtney L."/>
            <person name="Cloud J."/>
            <person name="Abbott A."/>
            <person name="Scott K."/>
            <person name="Johnson D."/>
            <person name="Minx P."/>
            <person name="Bentley D."/>
            <person name="Fulton B."/>
            <person name="Miller N."/>
            <person name="Greco T."/>
            <person name="Kemp K."/>
            <person name="Kramer J."/>
            <person name="Fulton L."/>
            <person name="Mardis E."/>
            <person name="Dante M."/>
            <person name="Pepin K."/>
            <person name="Hillier L.W."/>
            <person name="Nelson J."/>
            <person name="Spieth J."/>
            <person name="Ryan E."/>
            <person name="Andrews S."/>
            <person name="Geisel C."/>
            <person name="Layman D."/>
            <person name="Du H."/>
            <person name="Ali J."/>
            <person name="Berghoff A."/>
            <person name="Jones K."/>
            <person name="Drone K."/>
            <person name="Cotton M."/>
            <person name="Joshu C."/>
            <person name="Antonoiu B."/>
            <person name="Zidanic M."/>
            <person name="Strong C."/>
            <person name="Sun H."/>
            <person name="Lamar B."/>
            <person name="Yordan C."/>
            <person name="Ma P."/>
            <person name="Zhong J."/>
            <person name="Preston R."/>
            <person name="Vil D."/>
            <person name="Shekher M."/>
            <person name="Matero A."/>
            <person name="Shah R."/>
            <person name="Swaby I.K."/>
            <person name="O'Shaughnessy A."/>
            <person name="Rodriguez M."/>
            <person name="Hoffman J."/>
            <person name="Till S."/>
            <person name="Granat S."/>
            <person name="Shohdy N."/>
            <person name="Hasegawa A."/>
            <person name="Hameed A."/>
            <person name="Lodhi M."/>
            <person name="Johnson A."/>
            <person name="Chen E."/>
            <person name="Marra M.A."/>
            <person name="Martienssen R."/>
            <person name="McCombie W.R."/>
        </authorList>
    </citation>
    <scope>NUCLEOTIDE SEQUENCE [LARGE SCALE GENOMIC DNA]</scope>
    <source>
        <strain>cv. Columbia</strain>
    </source>
</reference>
<reference key="2">
    <citation type="journal article" date="2017" name="Plant J.">
        <title>Araport11: a complete reannotation of the Arabidopsis thaliana reference genome.</title>
        <authorList>
            <person name="Cheng C.Y."/>
            <person name="Krishnakumar V."/>
            <person name="Chan A.P."/>
            <person name="Thibaud-Nissen F."/>
            <person name="Schobel S."/>
            <person name="Town C.D."/>
        </authorList>
    </citation>
    <scope>GENOME REANNOTATION</scope>
    <source>
        <strain>cv. Columbia</strain>
    </source>
</reference>
<reference key="3">
    <citation type="journal article" date="2003" name="Science">
        <title>Empirical analysis of transcriptional activity in the Arabidopsis genome.</title>
        <authorList>
            <person name="Yamada K."/>
            <person name="Lim J."/>
            <person name="Dale J.M."/>
            <person name="Chen H."/>
            <person name="Shinn P."/>
            <person name="Palm C.J."/>
            <person name="Southwick A.M."/>
            <person name="Wu H.C."/>
            <person name="Kim C.J."/>
            <person name="Nguyen M."/>
            <person name="Pham P.K."/>
            <person name="Cheuk R.F."/>
            <person name="Karlin-Newmann G."/>
            <person name="Liu S.X."/>
            <person name="Lam B."/>
            <person name="Sakano H."/>
            <person name="Wu T."/>
            <person name="Yu G."/>
            <person name="Miranda M."/>
            <person name="Quach H.L."/>
            <person name="Tripp M."/>
            <person name="Chang C.H."/>
            <person name="Lee J.M."/>
            <person name="Toriumi M.J."/>
            <person name="Chan M.M."/>
            <person name="Tang C.C."/>
            <person name="Onodera C.S."/>
            <person name="Deng J.M."/>
            <person name="Akiyama K."/>
            <person name="Ansari Y."/>
            <person name="Arakawa T."/>
            <person name="Banh J."/>
            <person name="Banno F."/>
            <person name="Bowser L."/>
            <person name="Brooks S.Y."/>
            <person name="Carninci P."/>
            <person name="Chao Q."/>
            <person name="Choy N."/>
            <person name="Enju A."/>
            <person name="Goldsmith A.D."/>
            <person name="Gurjal M."/>
            <person name="Hansen N.F."/>
            <person name="Hayashizaki Y."/>
            <person name="Johnson-Hopson C."/>
            <person name="Hsuan V.W."/>
            <person name="Iida K."/>
            <person name="Karnes M."/>
            <person name="Khan S."/>
            <person name="Koesema E."/>
            <person name="Ishida J."/>
            <person name="Jiang P.X."/>
            <person name="Jones T."/>
            <person name="Kawai J."/>
            <person name="Kamiya A."/>
            <person name="Meyers C."/>
            <person name="Nakajima M."/>
            <person name="Narusaka M."/>
            <person name="Seki M."/>
            <person name="Sakurai T."/>
            <person name="Satou M."/>
            <person name="Tamse R."/>
            <person name="Vaysberg M."/>
            <person name="Wallender E.K."/>
            <person name="Wong C."/>
            <person name="Yamamura Y."/>
            <person name="Yuan S."/>
            <person name="Shinozaki K."/>
            <person name="Davis R.W."/>
            <person name="Theologis A."/>
            <person name="Ecker J.R."/>
        </authorList>
    </citation>
    <scope>NUCLEOTIDE SEQUENCE [LARGE SCALE MRNA]</scope>
    <source>
        <strain>cv. Columbia</strain>
    </source>
</reference>
<reference key="4">
    <citation type="journal article" date="2003" name="New Phytol.">
        <title>Calmodulins and related potential calcium sensors of Arabidopsis.</title>
        <authorList>
            <person name="McCormack E."/>
            <person name="Braam J."/>
        </authorList>
    </citation>
    <scope>GENE FAMILY</scope>
    <scope>NOMENCLATURE</scope>
</reference>
<comment type="function">
    <text evidence="1">Potential calcium sensor.</text>
</comment>
<comment type="similarity">
    <text evidence="3">Belongs to the calmodulin family.</text>
</comment>
<gene>
    <name type="primary">CML6</name>
    <name type="ordered locus">At4g03290</name>
    <name type="ORF">F4C21.22</name>
</gene>
<protein>
    <recommendedName>
        <fullName>Calmodulin-like protein 6</fullName>
    </recommendedName>
</protein>
<sequence>MDSTELNRVFQMFDKDGDGKITTKELNESFKNLGIIIPEDELTQIIQKIDVNGDGCVDIEEFGELYKTIMVEDEDEVGEEDMKEAFNVFDRNGDGFITVDELKAVLSSLGLKQGKTLEECRKMIMQVDVDGDGRVNYMEFRQMMKKGRFFSSLS</sequence>
<feature type="chain" id="PRO_0000342889" description="Calmodulin-like protein 6">
    <location>
        <begin position="1"/>
        <end position="154"/>
    </location>
</feature>
<feature type="domain" description="EF-hand 1" evidence="2">
    <location>
        <begin position="1"/>
        <end position="36"/>
    </location>
</feature>
<feature type="domain" description="EF-hand 2" evidence="2">
    <location>
        <begin position="37"/>
        <end position="72"/>
    </location>
</feature>
<feature type="domain" description="EF-hand 3" evidence="2">
    <location>
        <begin position="77"/>
        <end position="112"/>
    </location>
</feature>
<feature type="domain" description="EF-hand 4" evidence="2">
    <location>
        <begin position="115"/>
        <end position="150"/>
    </location>
</feature>
<feature type="binding site" evidence="2">
    <location>
        <position position="14"/>
    </location>
    <ligand>
        <name>Ca(2+)</name>
        <dbReference type="ChEBI" id="CHEBI:29108"/>
        <label>1</label>
    </ligand>
</feature>
<feature type="binding site" evidence="2">
    <location>
        <position position="16"/>
    </location>
    <ligand>
        <name>Ca(2+)</name>
        <dbReference type="ChEBI" id="CHEBI:29108"/>
        <label>1</label>
    </ligand>
</feature>
<feature type="binding site" evidence="2">
    <location>
        <position position="18"/>
    </location>
    <ligand>
        <name>Ca(2+)</name>
        <dbReference type="ChEBI" id="CHEBI:29108"/>
        <label>1</label>
    </ligand>
</feature>
<feature type="binding site" evidence="2">
    <location>
        <position position="20"/>
    </location>
    <ligand>
        <name>Ca(2+)</name>
        <dbReference type="ChEBI" id="CHEBI:29108"/>
        <label>1</label>
    </ligand>
</feature>
<feature type="binding site" evidence="2">
    <location>
        <position position="25"/>
    </location>
    <ligand>
        <name>Ca(2+)</name>
        <dbReference type="ChEBI" id="CHEBI:29108"/>
        <label>1</label>
    </ligand>
</feature>
<feature type="binding site" evidence="2">
    <location>
        <position position="50"/>
    </location>
    <ligand>
        <name>Ca(2+)</name>
        <dbReference type="ChEBI" id="CHEBI:29108"/>
        <label>2</label>
    </ligand>
</feature>
<feature type="binding site" evidence="2">
    <location>
        <position position="52"/>
    </location>
    <ligand>
        <name>Ca(2+)</name>
        <dbReference type="ChEBI" id="CHEBI:29108"/>
        <label>2</label>
    </ligand>
</feature>
<feature type="binding site" evidence="2">
    <location>
        <position position="54"/>
    </location>
    <ligand>
        <name>Ca(2+)</name>
        <dbReference type="ChEBI" id="CHEBI:29108"/>
        <label>2</label>
    </ligand>
</feature>
<feature type="binding site" evidence="2">
    <location>
        <position position="56"/>
    </location>
    <ligand>
        <name>Ca(2+)</name>
        <dbReference type="ChEBI" id="CHEBI:29108"/>
        <label>2</label>
    </ligand>
</feature>
<feature type="binding site" evidence="2">
    <location>
        <position position="61"/>
    </location>
    <ligand>
        <name>Ca(2+)</name>
        <dbReference type="ChEBI" id="CHEBI:29108"/>
        <label>2</label>
    </ligand>
</feature>
<feature type="binding site" evidence="2">
    <location>
        <position position="90"/>
    </location>
    <ligand>
        <name>Ca(2+)</name>
        <dbReference type="ChEBI" id="CHEBI:29108"/>
        <label>3</label>
    </ligand>
</feature>
<feature type="binding site" evidence="2">
    <location>
        <position position="92"/>
    </location>
    <ligand>
        <name>Ca(2+)</name>
        <dbReference type="ChEBI" id="CHEBI:29108"/>
        <label>3</label>
    </ligand>
</feature>
<feature type="binding site" evidence="2">
    <location>
        <position position="94"/>
    </location>
    <ligand>
        <name>Ca(2+)</name>
        <dbReference type="ChEBI" id="CHEBI:29108"/>
        <label>3</label>
    </ligand>
</feature>
<feature type="binding site" evidence="2">
    <location>
        <position position="101"/>
    </location>
    <ligand>
        <name>Ca(2+)</name>
        <dbReference type="ChEBI" id="CHEBI:29108"/>
        <label>3</label>
    </ligand>
</feature>
<feature type="binding site" evidence="2">
    <location>
        <position position="128"/>
    </location>
    <ligand>
        <name>Ca(2+)</name>
        <dbReference type="ChEBI" id="CHEBI:29108"/>
        <label>4</label>
    </ligand>
</feature>
<feature type="binding site" evidence="2">
    <location>
        <position position="130"/>
    </location>
    <ligand>
        <name>Ca(2+)</name>
        <dbReference type="ChEBI" id="CHEBI:29108"/>
        <label>4</label>
    </ligand>
</feature>
<feature type="binding site" evidence="2">
    <location>
        <position position="132"/>
    </location>
    <ligand>
        <name>Ca(2+)</name>
        <dbReference type="ChEBI" id="CHEBI:29108"/>
        <label>4</label>
    </ligand>
</feature>
<feature type="binding site" evidence="2">
    <location>
        <position position="134"/>
    </location>
    <ligand>
        <name>Ca(2+)</name>
        <dbReference type="ChEBI" id="CHEBI:29108"/>
        <label>4</label>
    </ligand>
</feature>
<feature type="binding site" evidence="2">
    <location>
        <position position="139"/>
    </location>
    <ligand>
        <name>Ca(2+)</name>
        <dbReference type="ChEBI" id="CHEBI:29108"/>
        <label>4</label>
    </ligand>
</feature>
<name>CML6_ARATH</name>
<evidence type="ECO:0000250" key="1"/>
<evidence type="ECO:0000255" key="2">
    <source>
        <dbReference type="PROSITE-ProRule" id="PRU00448"/>
    </source>
</evidence>
<evidence type="ECO:0000305" key="3"/>
<proteinExistence type="evidence at transcript level"/>
<keyword id="KW-0106">Calcium</keyword>
<keyword id="KW-0479">Metal-binding</keyword>
<keyword id="KW-1185">Reference proteome</keyword>
<keyword id="KW-0677">Repeat</keyword>